<reference key="1">
    <citation type="journal article" date="2003" name="Biochimie">
        <title>A new type of cysteine proteinase inhibitor--the salarin gene from Atlantic salmon (Salmo salar L.) and Arctic charr (Salvelinus alpinus).</title>
        <authorList>
            <person name="Olonen A."/>
            <person name="Kalkkinen N."/>
            <person name="Paulin L."/>
        </authorList>
    </citation>
    <scope>NUCLEOTIDE SEQUENCE [MRNA]</scope>
    <scope>PROTEIN SEQUENCE OF N-TERMINUS</scope>
    <scope>PARTIAL PROTEIN SEQUENCE</scope>
    <scope>MASS SPECTROMETRY</scope>
    <source>
        <tissue>Liver</tissue>
    </source>
</reference>
<proteinExistence type="evidence at protein level"/>
<accession>Q70SU7</accession>
<organism evidence="4">
    <name type="scientific">Salvelinus alpinus</name>
    <name type="common">Arctic char</name>
    <name type="synonym">Salmo alpinus</name>
    <dbReference type="NCBI Taxonomy" id="8036"/>
    <lineage>
        <taxon>Eukaryota</taxon>
        <taxon>Metazoa</taxon>
        <taxon>Chordata</taxon>
        <taxon>Craniata</taxon>
        <taxon>Vertebrata</taxon>
        <taxon>Euteleostomi</taxon>
        <taxon>Actinopterygii</taxon>
        <taxon>Neopterygii</taxon>
        <taxon>Teleostei</taxon>
        <taxon>Protacanthopterygii</taxon>
        <taxon>Salmoniformes</taxon>
        <taxon>Salmonidae</taxon>
        <taxon>Salmoninae</taxon>
        <taxon>Salvelinus</taxon>
    </lineage>
</organism>
<evidence type="ECO:0000250" key="1">
    <source>
        <dbReference type="UniProtKB" id="Q70SU8"/>
    </source>
</evidence>
<evidence type="ECO:0000255" key="2"/>
<evidence type="ECO:0000269" key="3">
    <source>
    </source>
</evidence>
<evidence type="ECO:0000312" key="4">
    <source>
        <dbReference type="EMBL" id="CAD80247.1"/>
    </source>
</evidence>
<dbReference type="EMBL" id="AJ550229">
    <property type="protein sequence ID" value="CAD80247.1"/>
    <property type="molecule type" value="mRNA"/>
</dbReference>
<dbReference type="SMR" id="Q70SU7"/>
<dbReference type="MEROPS" id="I29.951"/>
<dbReference type="GlyCosmos" id="Q70SU7">
    <property type="glycosylation" value="2 sites, No reported glycans"/>
</dbReference>
<dbReference type="GO" id="GO:0005773">
    <property type="term" value="C:vacuole"/>
    <property type="evidence" value="ECO:0007669"/>
    <property type="project" value="UniProtKB-SubCell"/>
</dbReference>
<dbReference type="GO" id="GO:0004869">
    <property type="term" value="F:cysteine-type endopeptidase inhibitor activity"/>
    <property type="evidence" value="ECO:0007669"/>
    <property type="project" value="UniProtKB-KW"/>
</dbReference>
<dbReference type="FunFam" id="1.10.287.2250:FF:000003">
    <property type="entry name" value="Cathepsin L"/>
    <property type="match status" value="4"/>
</dbReference>
<dbReference type="Gene3D" id="1.10.287.2250">
    <property type="match status" value="4"/>
</dbReference>
<dbReference type="InterPro" id="IPR038765">
    <property type="entry name" value="Papain-like_cys_pep_sf"/>
</dbReference>
<dbReference type="InterPro" id="IPR013201">
    <property type="entry name" value="Prot_inhib_I29"/>
</dbReference>
<dbReference type="Pfam" id="PF08246">
    <property type="entry name" value="Inhibitor_I29"/>
    <property type="match status" value="4"/>
</dbReference>
<dbReference type="SMART" id="SM00848">
    <property type="entry name" value="Inhibitor_I29"/>
    <property type="match status" value="4"/>
</dbReference>
<dbReference type="SUPFAM" id="SSF54001">
    <property type="entry name" value="Cysteine proteinases"/>
    <property type="match status" value="4"/>
</dbReference>
<feature type="signal peptide" evidence="3">
    <location>
        <begin position="1"/>
        <end position="19"/>
    </location>
</feature>
<feature type="chain" id="PRO_5004283505" description="Cystein proteinase inhibitor protein salarin" evidence="2">
    <location>
        <begin position="20"/>
        <end position="342"/>
    </location>
</feature>
<feature type="glycosylation site" description="N-linked (GlcNAc) asparagine" evidence="1">
    <location>
        <position position="153"/>
    </location>
</feature>
<feature type="glycosylation site" description="O-linked (GlcNAc) threonine" evidence="1">
    <location>
        <position position="184"/>
    </location>
</feature>
<sequence>MKSLVLLLLVAVTVSSVVSKPLPEDSEAEVHKEFETWKVKYGKSYPSTEEEAKRKEMWLATRKRVMEHNTRAGNGLESYTMAVNHFADLTTEEVPKGLLPMPRPEEEEVDKEFEMWKTVNGKTYNSTEEEARRKEIWLATRARVMEHNKRAENGSESFTMGINYFSDMTFEEVPKGRLMVVFPTRDGGEEAEVDKEFEMWKVQHGKSYGSTEEEAKRKEIWLATRTRVMEHNKRAETGLESFTMGMNHLSDKTTAEVTGQRLQDREEAEVHKEFETWKVKYGKTYPSTEEEAKRKEIWLATRKMVTEHNKRAENGQESFTMAVNHFADLTTEEVPKGLLPME</sequence>
<comment type="function">
    <text evidence="1">Inhibits papain and ficin (cysteine proteinases) but not trypsin (a serine proteinase).</text>
</comment>
<comment type="subcellular location">
    <subcellularLocation>
        <location evidence="1">Cytoplasm</location>
    </subcellularLocation>
    <subcellularLocation>
        <location evidence="1">Vacuole</location>
    </subcellularLocation>
</comment>
<comment type="PTM">
    <text evidence="1">N-glycosylated, with sialylated biantennary complex-type glycans.</text>
</comment>
<comment type="PTM">
    <text evidence="1">O-glycosylated, with sialylated oligosaccharides.</text>
</comment>
<comment type="mass spectrometry">
    <molecule>Cystein proteinase inhibitor protein salarin</molecule>
</comment>
<keyword id="KW-0963">Cytoplasm</keyword>
<keyword id="KW-0903">Direct protein sequencing</keyword>
<keyword id="KW-0325">Glycoprotein</keyword>
<keyword id="KW-0646">Protease inhibitor</keyword>
<keyword id="KW-0732">Signal</keyword>
<keyword id="KW-0789">Thiol protease inhibitor</keyword>
<keyword id="KW-0926">Vacuole</keyword>
<name>SALRN_SALAL</name>
<gene>
    <name type="primary">salarin</name>
</gene>
<protein>
    <recommendedName>
        <fullName>Cystein proteinase inhibitor protein salarin</fullName>
    </recommendedName>
</protein>